<proteinExistence type="evidence at protein level"/>
<name>RPSD_BACSU</name>
<organism>
    <name type="scientific">Bacillus subtilis (strain 168)</name>
    <dbReference type="NCBI Taxonomy" id="224308"/>
    <lineage>
        <taxon>Bacteria</taxon>
        <taxon>Bacillati</taxon>
        <taxon>Bacillota</taxon>
        <taxon>Bacilli</taxon>
        <taxon>Bacillales</taxon>
        <taxon>Bacillaceae</taxon>
        <taxon>Bacillus</taxon>
    </lineage>
</organism>
<evidence type="ECO:0000250" key="1"/>
<evidence type="ECO:0000269" key="2">
    <source>
    </source>
</evidence>
<evidence type="ECO:0000269" key="3">
    <source>
    </source>
</evidence>
<evidence type="ECO:0000305" key="4"/>
<evidence type="ECO:0000305" key="5">
    <source>
    </source>
</evidence>
<keyword id="KW-0903">Direct protein sequencing</keyword>
<keyword id="KW-0238">DNA-binding</keyword>
<keyword id="KW-1185">Reference proteome</keyword>
<keyword id="KW-0731">Sigma factor</keyword>
<keyword id="KW-0804">Transcription</keyword>
<keyword id="KW-0805">Transcription regulation</keyword>
<comment type="function">
    <text evidence="2">Sigma factors are initiation factors that promote the attachment of RNA polymerase (RNAP) to specific initiation sites and are then released. This alternative sigma factor is required for the transcription of the flagellin and motility genes as well as for wild-type chemotaxis. Associates with the RNAP core during all growth phases with a peak at the transition to stationary phase (PubMed:21710567).</text>
</comment>
<comment type="subunit">
    <text evidence="3 5">Monomer (PubMed:7602586). Interacts transiently with the RNAP core (Probable).</text>
</comment>
<comment type="induction">
    <text evidence="2">Association with RNAP core increases during H(2)O(2), NaOH, rifampicin stress and during sporulation (at protein level).</text>
</comment>
<comment type="mass spectrometry" mass="29533.0" error="295.0" method="MALDI" evidence="3"/>
<comment type="similarity">
    <text evidence="4">Belongs to the sigma-70 factor family.</text>
</comment>
<gene>
    <name type="primary">sigD</name>
    <name type="synonym">flaB</name>
    <name type="ordered locus">BSU16470</name>
</gene>
<feature type="chain" id="PRO_0000093978" description="RNA polymerase sigma-D factor">
    <location>
        <begin position="1"/>
        <end position="254"/>
    </location>
</feature>
<feature type="DNA-binding region" description="H-T-H motif" evidence="1">
    <location>
        <begin position="220"/>
        <end position="239"/>
    </location>
</feature>
<feature type="short sequence motif" description="Polymerase core binding">
    <location>
        <begin position="54"/>
        <end position="67"/>
    </location>
</feature>
<reference key="1">
    <citation type="journal article" date="1988" name="J. Bacteriol.">
        <title>Cloning, sequencing, and disruption of the Bacillus subtilis sigma 28 gene.</title>
        <authorList>
            <person name="Helmann J.D."/>
            <person name="Marquez L.M."/>
            <person name="Chamberlin M.J."/>
        </authorList>
    </citation>
    <scope>NUCLEOTIDE SEQUENCE [GENOMIC DNA]</scope>
    <scope>PARTIAL PROTEIN SEQUENCE</scope>
</reference>
<reference key="2">
    <citation type="journal article" date="1997" name="Nature">
        <title>The complete genome sequence of the Gram-positive bacterium Bacillus subtilis.</title>
        <authorList>
            <person name="Kunst F."/>
            <person name="Ogasawara N."/>
            <person name="Moszer I."/>
            <person name="Albertini A.M."/>
            <person name="Alloni G."/>
            <person name="Azevedo V."/>
            <person name="Bertero M.G."/>
            <person name="Bessieres P."/>
            <person name="Bolotin A."/>
            <person name="Borchert S."/>
            <person name="Borriss R."/>
            <person name="Boursier L."/>
            <person name="Brans A."/>
            <person name="Braun M."/>
            <person name="Brignell S.C."/>
            <person name="Bron S."/>
            <person name="Brouillet S."/>
            <person name="Bruschi C.V."/>
            <person name="Caldwell B."/>
            <person name="Capuano V."/>
            <person name="Carter N.M."/>
            <person name="Choi S.-K."/>
            <person name="Codani J.-J."/>
            <person name="Connerton I.F."/>
            <person name="Cummings N.J."/>
            <person name="Daniel R.A."/>
            <person name="Denizot F."/>
            <person name="Devine K.M."/>
            <person name="Duesterhoeft A."/>
            <person name="Ehrlich S.D."/>
            <person name="Emmerson P.T."/>
            <person name="Entian K.-D."/>
            <person name="Errington J."/>
            <person name="Fabret C."/>
            <person name="Ferrari E."/>
            <person name="Foulger D."/>
            <person name="Fritz C."/>
            <person name="Fujita M."/>
            <person name="Fujita Y."/>
            <person name="Fuma S."/>
            <person name="Galizzi A."/>
            <person name="Galleron N."/>
            <person name="Ghim S.-Y."/>
            <person name="Glaser P."/>
            <person name="Goffeau A."/>
            <person name="Golightly E.J."/>
            <person name="Grandi G."/>
            <person name="Guiseppi G."/>
            <person name="Guy B.J."/>
            <person name="Haga K."/>
            <person name="Haiech J."/>
            <person name="Harwood C.R."/>
            <person name="Henaut A."/>
            <person name="Hilbert H."/>
            <person name="Holsappel S."/>
            <person name="Hosono S."/>
            <person name="Hullo M.-F."/>
            <person name="Itaya M."/>
            <person name="Jones L.-M."/>
            <person name="Joris B."/>
            <person name="Karamata D."/>
            <person name="Kasahara Y."/>
            <person name="Klaerr-Blanchard M."/>
            <person name="Klein C."/>
            <person name="Kobayashi Y."/>
            <person name="Koetter P."/>
            <person name="Koningstein G."/>
            <person name="Krogh S."/>
            <person name="Kumano M."/>
            <person name="Kurita K."/>
            <person name="Lapidus A."/>
            <person name="Lardinois S."/>
            <person name="Lauber J."/>
            <person name="Lazarevic V."/>
            <person name="Lee S.-M."/>
            <person name="Levine A."/>
            <person name="Liu H."/>
            <person name="Masuda S."/>
            <person name="Mauel C."/>
            <person name="Medigue C."/>
            <person name="Medina N."/>
            <person name="Mellado R.P."/>
            <person name="Mizuno M."/>
            <person name="Moestl D."/>
            <person name="Nakai S."/>
            <person name="Noback M."/>
            <person name="Noone D."/>
            <person name="O'Reilly M."/>
            <person name="Ogawa K."/>
            <person name="Ogiwara A."/>
            <person name="Oudega B."/>
            <person name="Park S.-H."/>
            <person name="Parro V."/>
            <person name="Pohl T.M."/>
            <person name="Portetelle D."/>
            <person name="Porwollik S."/>
            <person name="Prescott A.M."/>
            <person name="Presecan E."/>
            <person name="Pujic P."/>
            <person name="Purnelle B."/>
            <person name="Rapoport G."/>
            <person name="Rey M."/>
            <person name="Reynolds S."/>
            <person name="Rieger M."/>
            <person name="Rivolta C."/>
            <person name="Rocha E."/>
            <person name="Roche B."/>
            <person name="Rose M."/>
            <person name="Sadaie Y."/>
            <person name="Sato T."/>
            <person name="Scanlan E."/>
            <person name="Schleich S."/>
            <person name="Schroeter R."/>
            <person name="Scoffone F."/>
            <person name="Sekiguchi J."/>
            <person name="Sekowska A."/>
            <person name="Seror S.J."/>
            <person name="Serror P."/>
            <person name="Shin B.-S."/>
            <person name="Soldo B."/>
            <person name="Sorokin A."/>
            <person name="Tacconi E."/>
            <person name="Takagi T."/>
            <person name="Takahashi H."/>
            <person name="Takemaru K."/>
            <person name="Takeuchi M."/>
            <person name="Tamakoshi A."/>
            <person name="Tanaka T."/>
            <person name="Terpstra P."/>
            <person name="Tognoni A."/>
            <person name="Tosato V."/>
            <person name="Uchiyama S."/>
            <person name="Vandenbol M."/>
            <person name="Vannier F."/>
            <person name="Vassarotti A."/>
            <person name="Viari A."/>
            <person name="Wambutt R."/>
            <person name="Wedler E."/>
            <person name="Wedler H."/>
            <person name="Weitzenegger T."/>
            <person name="Winters P."/>
            <person name="Wipat A."/>
            <person name="Yamamoto H."/>
            <person name="Yamane K."/>
            <person name="Yasumoto K."/>
            <person name="Yata K."/>
            <person name="Yoshida K."/>
            <person name="Yoshikawa H.-F."/>
            <person name="Zumstein E."/>
            <person name="Yoshikawa H."/>
            <person name="Danchin A."/>
        </authorList>
    </citation>
    <scope>NUCLEOTIDE SEQUENCE [LARGE SCALE GENOMIC DNA]</scope>
    <source>
        <strain>168</strain>
    </source>
</reference>
<reference key="3">
    <citation type="journal article" date="1995" name="J. Mol. Biol.">
        <title>The Bacillus subtilis flagellar regulatory protein sigma D: overproduction, domain analysis and DNA-binding properties.</title>
        <authorList>
            <person name="Chen Y.-F."/>
            <person name="Helmann J.D."/>
        </authorList>
    </citation>
    <scope>PROTEIN SEQUENCE OF 1-20 AND 156-178</scope>
    <scope>SUBUNIT</scope>
    <scope>MASS SPECTROMETRY</scope>
</reference>
<reference key="4">
    <citation type="journal article" date="1994" name="J. Bacteriol.">
        <title>Characterization of the sigD transcription unit of Bacillus subtilis.</title>
        <authorList>
            <person name="Marquez-Magana L.M."/>
            <person name="Chamberlin M.J."/>
        </authorList>
    </citation>
    <scope>CHARACTERIZATION</scope>
</reference>
<reference key="5">
    <citation type="journal article" date="2011" name="Proteomics">
        <title>The dynamic protein partnership of RNA polymerase in Bacillus subtilis.</title>
        <authorList>
            <person name="Delumeau O."/>
            <person name="Lecointe F."/>
            <person name="Muntel J."/>
            <person name="Guillot A."/>
            <person name="Guedon E."/>
            <person name="Monnet V."/>
            <person name="Hecker M."/>
            <person name="Becher D."/>
            <person name="Polard P."/>
            <person name="Noirot P."/>
        </authorList>
    </citation>
    <scope>FUNCTION</scope>
    <scope>SUBUNIT</scope>
    <scope>INDUCTION</scope>
    <source>
        <strain>168</strain>
    </source>
</reference>
<dbReference type="EMBL" id="M20144">
    <property type="protein sequence ID" value="AAA61470.1"/>
    <property type="molecule type" value="Genomic_DNA"/>
</dbReference>
<dbReference type="EMBL" id="AL009126">
    <property type="protein sequence ID" value="CAB13520.1"/>
    <property type="molecule type" value="Genomic_DNA"/>
</dbReference>
<dbReference type="PIR" id="C55216">
    <property type="entry name" value="C55216"/>
</dbReference>
<dbReference type="RefSeq" id="NP_389529.1">
    <property type="nucleotide sequence ID" value="NC_000964.3"/>
</dbReference>
<dbReference type="RefSeq" id="WP_003220911.1">
    <property type="nucleotide sequence ID" value="NZ_OZ025638.1"/>
</dbReference>
<dbReference type="SMR" id="P10726"/>
<dbReference type="FunCoup" id="P10726">
    <property type="interactions" value="240"/>
</dbReference>
<dbReference type="STRING" id="224308.BSU16470"/>
<dbReference type="PaxDb" id="224308-BSU16470"/>
<dbReference type="EnsemblBacteria" id="CAB13520">
    <property type="protein sequence ID" value="CAB13520"/>
    <property type="gene ID" value="BSU_16470"/>
</dbReference>
<dbReference type="GeneID" id="86873843"/>
<dbReference type="GeneID" id="938482"/>
<dbReference type="KEGG" id="bsu:BSU16470"/>
<dbReference type="PATRIC" id="fig|224308.179.peg.1788"/>
<dbReference type="eggNOG" id="COG1191">
    <property type="taxonomic scope" value="Bacteria"/>
</dbReference>
<dbReference type="InParanoid" id="P10726"/>
<dbReference type="OrthoDB" id="9799825at2"/>
<dbReference type="PhylomeDB" id="P10726"/>
<dbReference type="BioCyc" id="BSUB:BSU16470-MONOMER"/>
<dbReference type="PRO" id="PR:P10726"/>
<dbReference type="Proteomes" id="UP000001570">
    <property type="component" value="Chromosome"/>
</dbReference>
<dbReference type="GO" id="GO:0003677">
    <property type="term" value="F:DNA binding"/>
    <property type="evidence" value="ECO:0007669"/>
    <property type="project" value="UniProtKB-KW"/>
</dbReference>
<dbReference type="GO" id="GO:0003899">
    <property type="term" value="F:DNA-directed RNA polymerase activity"/>
    <property type="evidence" value="ECO:0007669"/>
    <property type="project" value="InterPro"/>
</dbReference>
<dbReference type="GO" id="GO:0016987">
    <property type="term" value="F:sigma factor activity"/>
    <property type="evidence" value="ECO:0000318"/>
    <property type="project" value="GO_Central"/>
</dbReference>
<dbReference type="GO" id="GO:0071978">
    <property type="term" value="P:bacterial-type flagellum-dependent swarming motility"/>
    <property type="evidence" value="ECO:0000315"/>
    <property type="project" value="CACAO"/>
</dbReference>
<dbReference type="GO" id="GO:0006352">
    <property type="term" value="P:DNA-templated transcription initiation"/>
    <property type="evidence" value="ECO:0007669"/>
    <property type="project" value="InterPro"/>
</dbReference>
<dbReference type="GO" id="GO:0006355">
    <property type="term" value="P:regulation of DNA-templated transcription"/>
    <property type="evidence" value="ECO:0000318"/>
    <property type="project" value="GO_Central"/>
</dbReference>
<dbReference type="CDD" id="cd06171">
    <property type="entry name" value="Sigma70_r4"/>
    <property type="match status" value="1"/>
</dbReference>
<dbReference type="Gene3D" id="1.10.1740.10">
    <property type="match status" value="1"/>
</dbReference>
<dbReference type="Gene3D" id="1.20.140.160">
    <property type="match status" value="1"/>
</dbReference>
<dbReference type="InterPro" id="IPR014284">
    <property type="entry name" value="RNA_pol_sigma-70_dom"/>
</dbReference>
<dbReference type="InterPro" id="IPR000943">
    <property type="entry name" value="RNA_pol_sigma70"/>
</dbReference>
<dbReference type="InterPro" id="IPR007627">
    <property type="entry name" value="RNA_pol_sigma70_r2"/>
</dbReference>
<dbReference type="InterPro" id="IPR007624">
    <property type="entry name" value="RNA_pol_sigma70_r3"/>
</dbReference>
<dbReference type="InterPro" id="IPR007630">
    <property type="entry name" value="RNA_pol_sigma70_r4"/>
</dbReference>
<dbReference type="InterPro" id="IPR012845">
    <property type="entry name" value="RNA_pol_sigma_FliA_WhiG"/>
</dbReference>
<dbReference type="InterPro" id="IPR013325">
    <property type="entry name" value="RNA_pol_sigma_r2"/>
</dbReference>
<dbReference type="InterPro" id="IPR013324">
    <property type="entry name" value="RNA_pol_sigma_r3/r4-like"/>
</dbReference>
<dbReference type="NCBIfam" id="TIGR02479">
    <property type="entry name" value="FliA_WhiG"/>
    <property type="match status" value="1"/>
</dbReference>
<dbReference type="NCBIfam" id="NF005413">
    <property type="entry name" value="PRK06986.1"/>
    <property type="match status" value="1"/>
</dbReference>
<dbReference type="NCBIfam" id="NF005809">
    <property type="entry name" value="PRK07670.1"/>
    <property type="match status" value="1"/>
</dbReference>
<dbReference type="NCBIfam" id="TIGR02937">
    <property type="entry name" value="sigma70-ECF"/>
    <property type="match status" value="1"/>
</dbReference>
<dbReference type="PANTHER" id="PTHR30385:SF7">
    <property type="entry name" value="RNA POLYMERASE SIGMA FACTOR FLIA"/>
    <property type="match status" value="1"/>
</dbReference>
<dbReference type="PANTHER" id="PTHR30385">
    <property type="entry name" value="SIGMA FACTOR F FLAGELLAR"/>
    <property type="match status" value="1"/>
</dbReference>
<dbReference type="Pfam" id="PF04542">
    <property type="entry name" value="Sigma70_r2"/>
    <property type="match status" value="1"/>
</dbReference>
<dbReference type="Pfam" id="PF04539">
    <property type="entry name" value="Sigma70_r3"/>
    <property type="match status" value="1"/>
</dbReference>
<dbReference type="Pfam" id="PF04545">
    <property type="entry name" value="Sigma70_r4"/>
    <property type="match status" value="1"/>
</dbReference>
<dbReference type="PIRSF" id="PIRSF000770">
    <property type="entry name" value="RNA_pol_sigma-SigE/K"/>
    <property type="match status" value="1"/>
</dbReference>
<dbReference type="PRINTS" id="PR00046">
    <property type="entry name" value="SIGMA70FCT"/>
</dbReference>
<dbReference type="SUPFAM" id="SSF88946">
    <property type="entry name" value="Sigma2 domain of RNA polymerase sigma factors"/>
    <property type="match status" value="1"/>
</dbReference>
<dbReference type="SUPFAM" id="SSF88659">
    <property type="entry name" value="Sigma3 and sigma4 domains of RNA polymerase sigma factors"/>
    <property type="match status" value="2"/>
</dbReference>
<dbReference type="PROSITE" id="PS00715">
    <property type="entry name" value="SIGMA70_1"/>
    <property type="match status" value="1"/>
</dbReference>
<dbReference type="PROSITE" id="PS00716">
    <property type="entry name" value="SIGMA70_2"/>
    <property type="match status" value="1"/>
</dbReference>
<accession>P10726</accession>
<sequence length="254" mass="29468">MQSLNYEDQVLWTRWKEWKDPKAGDDLMRRYMPLVTYHVGRISVGLPKSVHKDDLMSLGMLGLYDALEKFDPSRDLKFDTYASFRIRGAIIDGLRKEDWLPRTSREKTKKVEAAIEKLEQRYLRNVSPAEIAEELGMTVQDVVSTMNEGFFANLLSIDEKLHDQDDGENIQVMIRDDKNVPPEEKIMKDELIAQLAEKIHELSEKEQLVVSLFYKEELTLTEIGQVLNLSTSRISQIHSKALFKLKNLLEKVIQ</sequence>
<protein>
    <recommendedName>
        <fullName>RNA polymerase sigma-D factor</fullName>
    </recommendedName>
    <alternativeName>
        <fullName>Sigma-28</fullName>
    </alternativeName>
</protein>